<sequence length="548" mass="60502">MISKINGKLFADMIIQGAQNLSNNADLVDSLNVYPVPDGDTGTNMNLTMTSGREEVENNLSKNIGELGKTFSKGLLMGARGNSGVILSQLFRGFCKNIESESEINSKLLAESFQAGVETAYKAVMKPVEGTILTVAKDAAQAAIEKANNTEDCIELMEYIIVKANESLENTPNLLAVLKEVGVVDSGGKGLLCVYEGFLKALKGEKVEAKVAKLDKDEFVHDEHDFHGVINTEDIIYGYCTEMMVRFGKNKKAFDEQEFRQDMSQFGDSLLVINDEEIVKVHVHTEYPGKVFNYGQQYGELIKLKVENMREQHREVIRKEQHTAKPKMETVETAIITISMGEGISEIFKSMGATHIISGGQTMNPSTEDIVKVIEQSKCKRAIILPNNKNILMASEQAASIVDAEAVVIPTKSIPQGISALFQYDVDATLEENKAQMADSVNNVKSGSLTYAVRDTKIDGVEIKKDAFMGLIEDKIVSSQSDQLTTVTELLNEMLADDSEILTVIIGQDAEQAVTDNMINWIEEQYPDVEVEVHEGGQPIYQYFFSVE</sequence>
<organism>
    <name type="scientific">Staphylococcus aureus (strain MRSA252)</name>
    <dbReference type="NCBI Taxonomy" id="282458"/>
    <lineage>
        <taxon>Bacteria</taxon>
        <taxon>Bacillati</taxon>
        <taxon>Bacillota</taxon>
        <taxon>Bacilli</taxon>
        <taxon>Bacillales</taxon>
        <taxon>Staphylococcaceae</taxon>
        <taxon>Staphylococcus</taxon>
    </lineage>
</organism>
<evidence type="ECO:0000255" key="1">
    <source>
        <dbReference type="PROSITE-ProRule" id="PRU00813"/>
    </source>
</evidence>
<name>Y1202_STAAR</name>
<gene>
    <name type="ordered locus">SAR1202</name>
</gene>
<protein>
    <recommendedName>
        <fullName>Uncharacterized protein SAR1202</fullName>
    </recommendedName>
</protein>
<accession>Q6GHK9</accession>
<reference key="1">
    <citation type="journal article" date="2004" name="Proc. Natl. Acad. Sci. U.S.A.">
        <title>Complete genomes of two clinical Staphylococcus aureus strains: evidence for the rapid evolution of virulence and drug resistance.</title>
        <authorList>
            <person name="Holden M.T.G."/>
            <person name="Feil E.J."/>
            <person name="Lindsay J.A."/>
            <person name="Peacock S.J."/>
            <person name="Day N.P.J."/>
            <person name="Enright M.C."/>
            <person name="Foster T.J."/>
            <person name="Moore C.E."/>
            <person name="Hurst L."/>
            <person name="Atkin R."/>
            <person name="Barron A."/>
            <person name="Bason N."/>
            <person name="Bentley S.D."/>
            <person name="Chillingworth C."/>
            <person name="Chillingworth T."/>
            <person name="Churcher C."/>
            <person name="Clark L."/>
            <person name="Corton C."/>
            <person name="Cronin A."/>
            <person name="Doggett J."/>
            <person name="Dowd L."/>
            <person name="Feltwell T."/>
            <person name="Hance Z."/>
            <person name="Harris B."/>
            <person name="Hauser H."/>
            <person name="Holroyd S."/>
            <person name="Jagels K."/>
            <person name="James K.D."/>
            <person name="Lennard N."/>
            <person name="Line A."/>
            <person name="Mayes R."/>
            <person name="Moule S."/>
            <person name="Mungall K."/>
            <person name="Ormond D."/>
            <person name="Quail M.A."/>
            <person name="Rabbinowitsch E."/>
            <person name="Rutherford K.M."/>
            <person name="Sanders M."/>
            <person name="Sharp S."/>
            <person name="Simmonds M."/>
            <person name="Stevens K."/>
            <person name="Whitehead S."/>
            <person name="Barrell B.G."/>
            <person name="Spratt B.G."/>
            <person name="Parkhill J."/>
        </authorList>
    </citation>
    <scope>NUCLEOTIDE SEQUENCE [LARGE SCALE GENOMIC DNA]</scope>
    <source>
        <strain>MRSA252</strain>
    </source>
</reference>
<proteinExistence type="predicted"/>
<feature type="chain" id="PRO_0000304157" description="Uncharacterized protein SAR1202">
    <location>
        <begin position="1"/>
        <end position="548"/>
    </location>
</feature>
<feature type="domain" description="DhaL" evidence="1">
    <location>
        <begin position="8"/>
        <end position="200"/>
    </location>
</feature>
<dbReference type="EMBL" id="BX571856">
    <property type="protein sequence ID" value="CAG40204.1"/>
    <property type="molecule type" value="Genomic_DNA"/>
</dbReference>
<dbReference type="SMR" id="Q6GHK9"/>
<dbReference type="KEGG" id="sar:SAR1202"/>
<dbReference type="HOGENOM" id="CLU_017496_1_0_9"/>
<dbReference type="Proteomes" id="UP000000596">
    <property type="component" value="Chromosome"/>
</dbReference>
<dbReference type="GO" id="GO:0004371">
    <property type="term" value="F:glycerone kinase activity"/>
    <property type="evidence" value="ECO:0007669"/>
    <property type="project" value="InterPro"/>
</dbReference>
<dbReference type="GO" id="GO:0006071">
    <property type="term" value="P:glycerol metabolic process"/>
    <property type="evidence" value="ECO:0007669"/>
    <property type="project" value="InterPro"/>
</dbReference>
<dbReference type="Gene3D" id="1.25.40.340">
    <property type="match status" value="1"/>
</dbReference>
<dbReference type="InterPro" id="IPR050270">
    <property type="entry name" value="DegV_domain_contain"/>
</dbReference>
<dbReference type="InterPro" id="IPR004007">
    <property type="entry name" value="DhaL_dom"/>
</dbReference>
<dbReference type="InterPro" id="IPR036117">
    <property type="entry name" value="DhaL_dom_sf"/>
</dbReference>
<dbReference type="InterPro" id="IPR033470">
    <property type="entry name" value="FakA-like_C"/>
</dbReference>
<dbReference type="InterPro" id="IPR048394">
    <property type="entry name" value="FakA-like_M"/>
</dbReference>
<dbReference type="InterPro" id="IPR019986">
    <property type="entry name" value="YloV-like"/>
</dbReference>
<dbReference type="NCBIfam" id="NF038248">
    <property type="entry name" value="FakA_VfrB"/>
    <property type="match status" value="1"/>
</dbReference>
<dbReference type="NCBIfam" id="TIGR03599">
    <property type="entry name" value="YloV"/>
    <property type="match status" value="1"/>
</dbReference>
<dbReference type="PANTHER" id="PTHR33434">
    <property type="entry name" value="DEGV DOMAIN-CONTAINING PROTEIN DR_1986-RELATED"/>
    <property type="match status" value="1"/>
</dbReference>
<dbReference type="PANTHER" id="PTHR33434:SF4">
    <property type="entry name" value="PHOSPHATASE PROTEIN"/>
    <property type="match status" value="1"/>
</dbReference>
<dbReference type="Pfam" id="PF02734">
    <property type="entry name" value="Dak2"/>
    <property type="match status" value="1"/>
</dbReference>
<dbReference type="Pfam" id="PF13684">
    <property type="entry name" value="FakA-like_C"/>
    <property type="match status" value="1"/>
</dbReference>
<dbReference type="Pfam" id="PF21645">
    <property type="entry name" value="FakA-like_M"/>
    <property type="match status" value="1"/>
</dbReference>
<dbReference type="SMART" id="SM01121">
    <property type="entry name" value="Dak1_2"/>
    <property type="match status" value="1"/>
</dbReference>
<dbReference type="SMART" id="SM01120">
    <property type="entry name" value="Dak2"/>
    <property type="match status" value="1"/>
</dbReference>
<dbReference type="SUPFAM" id="SSF101473">
    <property type="entry name" value="DhaL-like"/>
    <property type="match status" value="1"/>
</dbReference>
<dbReference type="PROSITE" id="PS51480">
    <property type="entry name" value="DHAL"/>
    <property type="match status" value="1"/>
</dbReference>